<protein>
    <recommendedName>
        <fullName>Down syndrome critical region protein 9</fullName>
    </recommendedName>
</protein>
<comment type="tissue specificity">
    <text evidence="2">Testis specific.</text>
</comment>
<organism>
    <name type="scientific">Homo sapiens</name>
    <name type="common">Human</name>
    <dbReference type="NCBI Taxonomy" id="9606"/>
    <lineage>
        <taxon>Eukaryota</taxon>
        <taxon>Metazoa</taxon>
        <taxon>Chordata</taxon>
        <taxon>Craniata</taxon>
        <taxon>Vertebrata</taxon>
        <taxon>Euteleostomi</taxon>
        <taxon>Mammalia</taxon>
        <taxon>Eutheria</taxon>
        <taxon>Euarchontoglires</taxon>
        <taxon>Primates</taxon>
        <taxon>Haplorrhini</taxon>
        <taxon>Catarrhini</taxon>
        <taxon>Hominidae</taxon>
        <taxon>Homo</taxon>
    </lineage>
</organism>
<gene>
    <name type="primary">DSCR9</name>
</gene>
<sequence length="149" mass="16743">MGRICPVNSRARRLRARPGRPSGDSLPYHQLQGGAPRLWSPDPGRPAAYRRAHVCDVTAPRWGSTSRQGEGAVLQRMLGRRAPPSWSRDHAYSRRGWENAALFLNRKRKQEGTENTSICCRPESALACGGNLSPQFLKKVIQIQTQELW</sequence>
<accession>P59020</accession>
<accession>B2R8P8</accession>
<evidence type="ECO:0000256" key="1">
    <source>
        <dbReference type="SAM" id="MobiDB-lite"/>
    </source>
</evidence>
<evidence type="ECO:0000269" key="2">
    <source>
    </source>
</evidence>
<evidence type="ECO:0000269" key="3">
    <source>
    </source>
</evidence>
<name>DSCR9_HUMAN</name>
<dbReference type="EMBL" id="AB066100">
    <property type="protein sequence ID" value="BAC07549.1"/>
    <property type="molecule type" value="mRNA"/>
</dbReference>
<dbReference type="EMBL" id="AK313458">
    <property type="protein sequence ID" value="BAG36245.1"/>
    <property type="molecule type" value="mRNA"/>
</dbReference>
<dbReference type="EMBL" id="AP001432">
    <property type="status" value="NOT_ANNOTATED_CDS"/>
    <property type="molecule type" value="Genomic_DNA"/>
</dbReference>
<dbReference type="EMBL" id="BC066653">
    <property type="status" value="NOT_ANNOTATED_CDS"/>
    <property type="molecule type" value="mRNA"/>
</dbReference>
<dbReference type="IntAct" id="P59020">
    <property type="interactions" value="145"/>
</dbReference>
<dbReference type="BioMuta" id="HGNC:16301"/>
<dbReference type="ProteomicsDB" id="57106"/>
<dbReference type="AGR" id="HGNC:16301"/>
<dbReference type="GeneCards" id="DSCR9"/>
<dbReference type="HGNC" id="HGNC:16301">
    <property type="gene designation" value="DSCR9"/>
</dbReference>
<dbReference type="neXtProt" id="NX_P59020"/>
<dbReference type="InParanoid" id="P59020"/>
<dbReference type="PAN-GO" id="P59020">
    <property type="GO annotations" value="0 GO annotations based on evolutionary models"/>
</dbReference>
<dbReference type="PhylomeDB" id="P59020"/>
<dbReference type="ChiTaRS" id="DSCR9">
    <property type="organism name" value="human"/>
</dbReference>
<dbReference type="Pharos" id="P59020">
    <property type="development level" value="Tdark"/>
</dbReference>
<dbReference type="PRO" id="PR:P59020"/>
<dbReference type="Proteomes" id="UP000005640">
    <property type="component" value="Unplaced"/>
</dbReference>
<dbReference type="RNAct" id="P59020">
    <property type="molecule type" value="protein"/>
</dbReference>
<keyword id="KW-1185">Reference proteome</keyword>
<feature type="chain" id="PRO_0000080022" description="Down syndrome critical region protein 9">
    <location>
        <begin position="1"/>
        <end position="149"/>
    </location>
</feature>
<feature type="region of interest" description="Disordered" evidence="1">
    <location>
        <begin position="1"/>
        <end position="41"/>
    </location>
</feature>
<feature type="sequence variant" id="VAR_033849" description="In dbSNP:rs1888464.">
    <original>G</original>
    <variation>V</variation>
    <location>
        <position position="23"/>
    </location>
</feature>
<feature type="sequence variant" id="VAR_024340" description="In dbSNP:rs13864." evidence="3">
    <original>R</original>
    <variation>L</variation>
    <location>
        <position position="76"/>
    </location>
</feature>
<reference key="1">
    <citation type="journal article" date="2002" name="DNA Res.">
        <title>Identification of two novel primate-specific genes in DSCR.</title>
        <authorList>
            <person name="Takamatsu K."/>
            <person name="Maekawa K."/>
            <person name="Togashi T."/>
            <person name="Choi D.K."/>
            <person name="Suzuki Y."/>
            <person name="Taylor T.D."/>
            <person name="Toyoda A."/>
            <person name="Sugano S."/>
            <person name="Fujiyama A."/>
            <person name="Hattori M."/>
            <person name="Sakaki Y."/>
            <person name="Takeda T."/>
        </authorList>
    </citation>
    <scope>NUCLEOTIDE SEQUENCE [MRNA]</scope>
    <scope>TISSUE SPECIFICITY</scope>
</reference>
<reference key="2">
    <citation type="journal article" date="2004" name="Nat. Genet.">
        <title>Complete sequencing and characterization of 21,243 full-length human cDNAs.</title>
        <authorList>
            <person name="Ota T."/>
            <person name="Suzuki Y."/>
            <person name="Nishikawa T."/>
            <person name="Otsuki T."/>
            <person name="Sugiyama T."/>
            <person name="Irie R."/>
            <person name="Wakamatsu A."/>
            <person name="Hayashi K."/>
            <person name="Sato H."/>
            <person name="Nagai K."/>
            <person name="Kimura K."/>
            <person name="Makita H."/>
            <person name="Sekine M."/>
            <person name="Obayashi M."/>
            <person name="Nishi T."/>
            <person name="Shibahara T."/>
            <person name="Tanaka T."/>
            <person name="Ishii S."/>
            <person name="Yamamoto J."/>
            <person name="Saito K."/>
            <person name="Kawai Y."/>
            <person name="Isono Y."/>
            <person name="Nakamura Y."/>
            <person name="Nagahari K."/>
            <person name="Murakami K."/>
            <person name="Yasuda T."/>
            <person name="Iwayanagi T."/>
            <person name="Wagatsuma M."/>
            <person name="Shiratori A."/>
            <person name="Sudo H."/>
            <person name="Hosoiri T."/>
            <person name="Kaku Y."/>
            <person name="Kodaira H."/>
            <person name="Kondo H."/>
            <person name="Sugawara M."/>
            <person name="Takahashi M."/>
            <person name="Kanda K."/>
            <person name="Yokoi T."/>
            <person name="Furuya T."/>
            <person name="Kikkawa E."/>
            <person name="Omura Y."/>
            <person name="Abe K."/>
            <person name="Kamihara K."/>
            <person name="Katsuta N."/>
            <person name="Sato K."/>
            <person name="Tanikawa M."/>
            <person name="Yamazaki M."/>
            <person name="Ninomiya K."/>
            <person name="Ishibashi T."/>
            <person name="Yamashita H."/>
            <person name="Murakawa K."/>
            <person name="Fujimori K."/>
            <person name="Tanai H."/>
            <person name="Kimata M."/>
            <person name="Watanabe M."/>
            <person name="Hiraoka S."/>
            <person name="Chiba Y."/>
            <person name="Ishida S."/>
            <person name="Ono Y."/>
            <person name="Takiguchi S."/>
            <person name="Watanabe S."/>
            <person name="Yosida M."/>
            <person name="Hotuta T."/>
            <person name="Kusano J."/>
            <person name="Kanehori K."/>
            <person name="Takahashi-Fujii A."/>
            <person name="Hara H."/>
            <person name="Tanase T.-O."/>
            <person name="Nomura Y."/>
            <person name="Togiya S."/>
            <person name="Komai F."/>
            <person name="Hara R."/>
            <person name="Takeuchi K."/>
            <person name="Arita M."/>
            <person name="Imose N."/>
            <person name="Musashino K."/>
            <person name="Yuuki H."/>
            <person name="Oshima A."/>
            <person name="Sasaki N."/>
            <person name="Aotsuka S."/>
            <person name="Yoshikawa Y."/>
            <person name="Matsunawa H."/>
            <person name="Ichihara T."/>
            <person name="Shiohata N."/>
            <person name="Sano S."/>
            <person name="Moriya S."/>
            <person name="Momiyama H."/>
            <person name="Satoh N."/>
            <person name="Takami S."/>
            <person name="Terashima Y."/>
            <person name="Suzuki O."/>
            <person name="Nakagawa S."/>
            <person name="Senoh A."/>
            <person name="Mizoguchi H."/>
            <person name="Goto Y."/>
            <person name="Shimizu F."/>
            <person name="Wakebe H."/>
            <person name="Hishigaki H."/>
            <person name="Watanabe T."/>
            <person name="Sugiyama A."/>
            <person name="Takemoto M."/>
            <person name="Kawakami B."/>
            <person name="Yamazaki M."/>
            <person name="Watanabe K."/>
            <person name="Kumagai A."/>
            <person name="Itakura S."/>
            <person name="Fukuzumi Y."/>
            <person name="Fujimori Y."/>
            <person name="Komiyama M."/>
            <person name="Tashiro H."/>
            <person name="Tanigami A."/>
            <person name="Fujiwara T."/>
            <person name="Ono T."/>
            <person name="Yamada K."/>
            <person name="Fujii Y."/>
            <person name="Ozaki K."/>
            <person name="Hirao M."/>
            <person name="Ohmori Y."/>
            <person name="Kawabata A."/>
            <person name="Hikiji T."/>
            <person name="Kobatake N."/>
            <person name="Inagaki H."/>
            <person name="Ikema Y."/>
            <person name="Okamoto S."/>
            <person name="Okitani R."/>
            <person name="Kawakami T."/>
            <person name="Noguchi S."/>
            <person name="Itoh T."/>
            <person name="Shigeta K."/>
            <person name="Senba T."/>
            <person name="Matsumura K."/>
            <person name="Nakajima Y."/>
            <person name="Mizuno T."/>
            <person name="Morinaga M."/>
            <person name="Sasaki M."/>
            <person name="Togashi T."/>
            <person name="Oyama M."/>
            <person name="Hata H."/>
            <person name="Watanabe M."/>
            <person name="Komatsu T."/>
            <person name="Mizushima-Sugano J."/>
            <person name="Satoh T."/>
            <person name="Shirai Y."/>
            <person name="Takahashi Y."/>
            <person name="Nakagawa K."/>
            <person name="Okumura K."/>
            <person name="Nagase T."/>
            <person name="Nomura N."/>
            <person name="Kikuchi H."/>
            <person name="Masuho Y."/>
            <person name="Yamashita R."/>
            <person name="Nakai K."/>
            <person name="Yada T."/>
            <person name="Nakamura Y."/>
            <person name="Ohara O."/>
            <person name="Isogai T."/>
            <person name="Sugano S."/>
        </authorList>
    </citation>
    <scope>NUCLEOTIDE SEQUENCE [LARGE SCALE MRNA]</scope>
    <scope>VARIANT LEU-76</scope>
    <source>
        <tissue>Caudate nucleus</tissue>
    </source>
</reference>
<reference key="3">
    <citation type="journal article" date="2000" name="Nature">
        <title>The DNA sequence of human chromosome 21.</title>
        <authorList>
            <person name="Hattori M."/>
            <person name="Fujiyama A."/>
            <person name="Taylor T.D."/>
            <person name="Watanabe H."/>
            <person name="Yada T."/>
            <person name="Park H.-S."/>
            <person name="Toyoda A."/>
            <person name="Ishii K."/>
            <person name="Totoki Y."/>
            <person name="Choi D.-K."/>
            <person name="Groner Y."/>
            <person name="Soeda E."/>
            <person name="Ohki M."/>
            <person name="Takagi T."/>
            <person name="Sakaki Y."/>
            <person name="Taudien S."/>
            <person name="Blechschmidt K."/>
            <person name="Polley A."/>
            <person name="Menzel U."/>
            <person name="Delabar J."/>
            <person name="Kumpf K."/>
            <person name="Lehmann R."/>
            <person name="Patterson D."/>
            <person name="Reichwald K."/>
            <person name="Rump A."/>
            <person name="Schillhabel M."/>
            <person name="Schudy A."/>
            <person name="Zimmermann W."/>
            <person name="Rosenthal A."/>
            <person name="Kudoh J."/>
            <person name="Shibuya K."/>
            <person name="Kawasaki K."/>
            <person name="Asakawa S."/>
            <person name="Shintani A."/>
            <person name="Sasaki T."/>
            <person name="Nagamine K."/>
            <person name="Mitsuyama S."/>
            <person name="Antonarakis S.E."/>
            <person name="Minoshima S."/>
            <person name="Shimizu N."/>
            <person name="Nordsiek G."/>
            <person name="Hornischer K."/>
            <person name="Brandt P."/>
            <person name="Scharfe M."/>
            <person name="Schoen O."/>
            <person name="Desario A."/>
            <person name="Reichelt J."/>
            <person name="Kauer G."/>
            <person name="Bloecker H."/>
            <person name="Ramser J."/>
            <person name="Beck A."/>
            <person name="Klages S."/>
            <person name="Hennig S."/>
            <person name="Riesselmann L."/>
            <person name="Dagand E."/>
            <person name="Wehrmeyer S."/>
            <person name="Borzym K."/>
            <person name="Gardiner K."/>
            <person name="Nizetic D."/>
            <person name="Francis F."/>
            <person name="Lehrach H."/>
            <person name="Reinhardt R."/>
            <person name="Yaspo M.-L."/>
        </authorList>
    </citation>
    <scope>NUCLEOTIDE SEQUENCE [LARGE SCALE GENOMIC DNA]</scope>
</reference>
<reference key="4">
    <citation type="journal article" date="2004" name="Genome Res.">
        <title>The status, quality, and expansion of the NIH full-length cDNA project: the Mammalian Gene Collection (MGC).</title>
        <authorList>
            <consortium name="The MGC Project Team"/>
        </authorList>
    </citation>
    <scope>NUCLEOTIDE SEQUENCE [LARGE SCALE MRNA]</scope>
    <source>
        <tissue>Skin</tissue>
    </source>
</reference>
<proteinExistence type="evidence at transcript level"/>